<accession>A9A9B6</accession>
<protein>
    <recommendedName>
        <fullName evidence="1">Large ribosomal subunit protein uL23</fullName>
    </recommendedName>
    <alternativeName>
        <fullName evidence="2">50S ribosomal protein L23</fullName>
    </alternativeName>
</protein>
<sequence length="86" mass="9529">MDAFDVIKTPIVSEKTMKLIEEENRLVFYVERKATKADISAAIKELFDAEVADINTSITPKGKKKAYITLKAEYNAGEVAASLGIY</sequence>
<organism>
    <name type="scientific">Methanococcus maripaludis (strain C6 / ATCC BAA-1332)</name>
    <dbReference type="NCBI Taxonomy" id="444158"/>
    <lineage>
        <taxon>Archaea</taxon>
        <taxon>Methanobacteriati</taxon>
        <taxon>Methanobacteriota</taxon>
        <taxon>Methanomada group</taxon>
        <taxon>Methanococci</taxon>
        <taxon>Methanococcales</taxon>
        <taxon>Methanococcaceae</taxon>
        <taxon>Methanococcus</taxon>
    </lineage>
</organism>
<gene>
    <name evidence="1" type="primary">rpl23</name>
    <name type="ordered locus">MmarC6_1125</name>
</gene>
<comment type="function">
    <text evidence="1">Binds to 23S rRNA. One of the proteins that surrounds the polypeptide exit tunnel on the outside of the ribosome.</text>
</comment>
<comment type="subunit">
    <text evidence="1">Part of the 50S ribosomal subunit. Contacts protein L29.</text>
</comment>
<comment type="similarity">
    <text evidence="1">Belongs to the universal ribosomal protein uL23 family.</text>
</comment>
<reference key="1">
    <citation type="submission" date="2007-10" db="EMBL/GenBank/DDBJ databases">
        <title>Complete sequence of Methanococcus maripaludis C6.</title>
        <authorList>
            <consortium name="US DOE Joint Genome Institute"/>
            <person name="Copeland A."/>
            <person name="Lucas S."/>
            <person name="Lapidus A."/>
            <person name="Barry K."/>
            <person name="Glavina del Rio T."/>
            <person name="Dalin E."/>
            <person name="Tice H."/>
            <person name="Pitluck S."/>
            <person name="Clum A."/>
            <person name="Schmutz J."/>
            <person name="Larimer F."/>
            <person name="Land M."/>
            <person name="Hauser L."/>
            <person name="Kyrpides N."/>
            <person name="Mikhailova N."/>
            <person name="Sieprawska-Lupa M."/>
            <person name="Whitman W.B."/>
            <person name="Richardson P."/>
        </authorList>
    </citation>
    <scope>NUCLEOTIDE SEQUENCE [LARGE SCALE GENOMIC DNA]</scope>
    <source>
        <strain>C6 / ATCC BAA-1332</strain>
    </source>
</reference>
<dbReference type="EMBL" id="CP000867">
    <property type="protein sequence ID" value="ABX01939.1"/>
    <property type="molecule type" value="Genomic_DNA"/>
</dbReference>
<dbReference type="SMR" id="A9A9B6"/>
<dbReference type="STRING" id="444158.MmarC6_1125"/>
<dbReference type="KEGG" id="mmx:MmarC6_1125"/>
<dbReference type="eggNOG" id="arCOG04072">
    <property type="taxonomic scope" value="Archaea"/>
</dbReference>
<dbReference type="HOGENOM" id="CLU_037562_4_2_2"/>
<dbReference type="OrthoDB" id="7751at2157"/>
<dbReference type="PhylomeDB" id="A9A9B6"/>
<dbReference type="GO" id="GO:1990904">
    <property type="term" value="C:ribonucleoprotein complex"/>
    <property type="evidence" value="ECO:0007669"/>
    <property type="project" value="UniProtKB-KW"/>
</dbReference>
<dbReference type="GO" id="GO:0005840">
    <property type="term" value="C:ribosome"/>
    <property type="evidence" value="ECO:0007669"/>
    <property type="project" value="UniProtKB-KW"/>
</dbReference>
<dbReference type="GO" id="GO:0019843">
    <property type="term" value="F:rRNA binding"/>
    <property type="evidence" value="ECO:0007669"/>
    <property type="project" value="UniProtKB-UniRule"/>
</dbReference>
<dbReference type="GO" id="GO:0003735">
    <property type="term" value="F:structural constituent of ribosome"/>
    <property type="evidence" value="ECO:0007669"/>
    <property type="project" value="InterPro"/>
</dbReference>
<dbReference type="GO" id="GO:0006412">
    <property type="term" value="P:translation"/>
    <property type="evidence" value="ECO:0007669"/>
    <property type="project" value="UniProtKB-UniRule"/>
</dbReference>
<dbReference type="FunFam" id="3.30.70.330:FF:000532">
    <property type="entry name" value="50S ribosomal protein L23"/>
    <property type="match status" value="1"/>
</dbReference>
<dbReference type="Gene3D" id="3.30.70.330">
    <property type="match status" value="1"/>
</dbReference>
<dbReference type="HAMAP" id="MF_01369_A">
    <property type="entry name" value="Ribosomal_uL23_A"/>
    <property type="match status" value="1"/>
</dbReference>
<dbReference type="HAMAP" id="MF_01369_B">
    <property type="entry name" value="Ribosomal_uL23_B"/>
    <property type="match status" value="1"/>
</dbReference>
<dbReference type="InterPro" id="IPR012677">
    <property type="entry name" value="Nucleotide-bd_a/b_plait_sf"/>
</dbReference>
<dbReference type="InterPro" id="IPR019985">
    <property type="entry name" value="Ribosomal_uL23"/>
</dbReference>
<dbReference type="InterPro" id="IPR013025">
    <property type="entry name" value="Ribosomal_uL23-like"/>
</dbReference>
<dbReference type="InterPro" id="IPR012678">
    <property type="entry name" value="Ribosomal_uL23/eL15/eS24_sf"/>
</dbReference>
<dbReference type="InterPro" id="IPR001014">
    <property type="entry name" value="Ribosomal_uL23_CS"/>
</dbReference>
<dbReference type="NCBIfam" id="NF011118">
    <property type="entry name" value="PRK14548.1"/>
    <property type="match status" value="1"/>
</dbReference>
<dbReference type="NCBIfam" id="TIGR03636">
    <property type="entry name" value="uL23_arch"/>
    <property type="match status" value="1"/>
</dbReference>
<dbReference type="PANTHER" id="PTHR11620">
    <property type="entry name" value="60S RIBOSOMAL PROTEIN L23A"/>
    <property type="match status" value="1"/>
</dbReference>
<dbReference type="Pfam" id="PF00276">
    <property type="entry name" value="Ribosomal_L23"/>
    <property type="match status" value="1"/>
</dbReference>
<dbReference type="SUPFAM" id="SSF54189">
    <property type="entry name" value="Ribosomal proteins S24e, L23 and L15e"/>
    <property type="match status" value="1"/>
</dbReference>
<dbReference type="PROSITE" id="PS00050">
    <property type="entry name" value="RIBOSOMAL_L23"/>
    <property type="match status" value="1"/>
</dbReference>
<name>RL23_METM6</name>
<feature type="chain" id="PRO_1000144588" description="Large ribosomal subunit protein uL23">
    <location>
        <begin position="1"/>
        <end position="86"/>
    </location>
</feature>
<evidence type="ECO:0000255" key="1">
    <source>
        <dbReference type="HAMAP-Rule" id="MF_01369"/>
    </source>
</evidence>
<evidence type="ECO:0000305" key="2"/>
<proteinExistence type="inferred from homology"/>
<keyword id="KW-0687">Ribonucleoprotein</keyword>
<keyword id="KW-0689">Ribosomal protein</keyword>
<keyword id="KW-0694">RNA-binding</keyword>
<keyword id="KW-0699">rRNA-binding</keyword>